<organism evidence="8">
    <name type="scientific">Campylobacter jejuni subsp. jejuni serotype O:2 (strain ATCC 700819 / NCTC 11168)</name>
    <dbReference type="NCBI Taxonomy" id="192222"/>
    <lineage>
        <taxon>Bacteria</taxon>
        <taxon>Pseudomonadati</taxon>
        <taxon>Campylobacterota</taxon>
        <taxon>Epsilonproteobacteria</taxon>
        <taxon>Campylobacterales</taxon>
        <taxon>Campylobacteraceae</taxon>
        <taxon>Campylobacter</taxon>
    </lineage>
</organism>
<sequence length="393" mass="45093">MKIVIVGIGYVGLANAILFSKNNENEVVLLDIDENKIQSINNHKSPIKDKLIEKFFVQNISKLHATSNIKEAYFNADFAVIATPTDYDEQLNFFDTRSIENVLKDIKNINSKINVIIKSTVPIGYTKTIKQKFNMSNIVFSPEFLREGSALYDSLYPSRIIIGDKSVLGKTIGDLFLKNIEKKNVDIFYMDSDEAESVKLFSNTYLAMRVGFFNEVDSYARKHNLNSADIIKGISADDRIGKYYNNPSFGYGGYCLPKDTKQLLANFYNIPNSLIKAIVETNEIRKKFITQLILEKKPNILGIYRLIMKQNSDNFRNSVIIDIIKYLQEYNSNIELIIYEPLVKEKKFLNIKVENDFNVFGAKVDLIIANRFDDKLKEIKDKVFSADVFYTDI</sequence>
<gene>
    <name evidence="8" type="primary">kfiD</name>
    <name evidence="8" type="ordered locus">Cj1441c</name>
</gene>
<comment type="function">
    <text evidence="4">Catalyzes the formation of UDP-glucuronic acid which is required for capsular polysaccharide synthesis. Does not catalyze the formation of glucuronamide moiety of the capsular polysaccharide.</text>
</comment>
<comment type="catalytic activity">
    <reaction evidence="1 4">
        <text>UDP-alpha-D-glucose + 2 NAD(+) + H2O = UDP-alpha-D-glucuronate + 2 NADH + 3 H(+)</text>
        <dbReference type="Rhea" id="RHEA:23596"/>
        <dbReference type="ChEBI" id="CHEBI:15377"/>
        <dbReference type="ChEBI" id="CHEBI:15378"/>
        <dbReference type="ChEBI" id="CHEBI:57540"/>
        <dbReference type="ChEBI" id="CHEBI:57945"/>
        <dbReference type="ChEBI" id="CHEBI:58052"/>
        <dbReference type="ChEBI" id="CHEBI:58885"/>
        <dbReference type="EC" id="1.1.1.22"/>
    </reaction>
</comment>
<comment type="biophysicochemical properties">
    <kinetics>
        <KM evidence="4">210 uM for UDP-glucose (at pH 8.7 and 25 degrees Celsius)</KM>
        <KM evidence="4">190 uM for NAD(+) (at pH 8.7 and 25 degrees Celsius)</KM>
        <text evidence="4">kcat is 1.2 sec(-1) with UDP-glucose as substrate. kcat is 0.80 sec(-1) with NAD(+) as substrate.</text>
    </kinetics>
</comment>
<comment type="pathway">
    <text evidence="4">Nucleotide-sugar biosynthesis; UDP-alpha-D-glucuronate biosynthesis; UDP-alpha-D-glucuronate from UDP-alpha-D-glucose: step 1/1.</text>
</comment>
<comment type="pathway">
    <text evidence="7">Capsule biogenesis; capsule polysaccharide biosynthesis.</text>
</comment>
<comment type="subunit">
    <text evidence="4">Homodimer.</text>
</comment>
<comment type="similarity">
    <text evidence="1">Belongs to the UDP-glucose/GDP-mannose dehydrogenase family.</text>
</comment>
<proteinExistence type="evidence at protein level"/>
<accession>Q0P8H3</accession>
<reference evidence="8 9" key="1">
    <citation type="journal article" date="2000" name="Nature">
        <title>The genome sequence of the food-borne pathogen Campylobacter jejuni reveals hypervariable sequences.</title>
        <authorList>
            <person name="Parkhill J."/>
            <person name="Wren B.W."/>
            <person name="Mungall K.L."/>
            <person name="Ketley J.M."/>
            <person name="Churcher C.M."/>
            <person name="Basham D."/>
            <person name="Chillingworth T."/>
            <person name="Davies R.M."/>
            <person name="Feltwell T."/>
            <person name="Holroyd S."/>
            <person name="Jagels K."/>
            <person name="Karlyshev A.V."/>
            <person name="Moule S."/>
            <person name="Pallen M.J."/>
            <person name="Penn C.W."/>
            <person name="Quail M.A."/>
            <person name="Rajandream M.A."/>
            <person name="Rutherford K.M."/>
            <person name="van Vliet A.H.M."/>
            <person name="Whitehead S."/>
            <person name="Barrell B.G."/>
        </authorList>
    </citation>
    <scope>NUCLEOTIDE SEQUENCE [LARGE SCALE GENOMIC DNA]</scope>
    <source>
        <strain evidence="9">ATCC 700819 / NCTC 11168</strain>
    </source>
</reference>
<reference evidence="10" key="2">
    <citation type="journal article" date="2021" name="Biochemistry">
        <title>Functional and Structural Characterization of the UDP-Glucose Dehydrogenase Involved in Capsular Polysaccharide Biosynthesis from Campylobacter jejuni.</title>
        <authorList>
            <person name="Riegert A.S."/>
            <person name="Raushel F.M."/>
        </authorList>
    </citation>
    <scope>X-RAY CRYSTALLOGRAPHY (2.09 ANGSTROMS) IN COMPLEX WITH NAD AND UDP-GLUCOSE</scope>
    <scope>FUNCTION</scope>
    <scope>CATALYTIC ACTIVITY</scope>
    <scope>BIOPHYSICOCHEMICAL PROPERTIES</scope>
    <scope>PATHWAY</scope>
    <scope>SUBUNIT</scope>
    <scope>ACTIVE SITE</scope>
    <scope>REACTION MECHANISM</scope>
    <source>
        <strain evidence="5">ATCC 700819 / NCTC 11168</strain>
    </source>
</reference>
<evidence type="ECO:0000255" key="1">
    <source>
        <dbReference type="PIRNR" id="PIRNR000124"/>
    </source>
</evidence>
<evidence type="ECO:0000255" key="2">
    <source>
        <dbReference type="PIRSR" id="PIRSR500134-1"/>
    </source>
</evidence>
<evidence type="ECO:0000255" key="3">
    <source>
        <dbReference type="PIRSR" id="PIRSR500134-3"/>
    </source>
</evidence>
<evidence type="ECO:0000269" key="4">
    <source>
    </source>
</evidence>
<evidence type="ECO:0000303" key="5">
    <source>
    </source>
</evidence>
<evidence type="ECO:0000305" key="6"/>
<evidence type="ECO:0000305" key="7">
    <source>
    </source>
</evidence>
<evidence type="ECO:0000312" key="8">
    <source>
        <dbReference type="EMBL" id="CAL35550.1"/>
    </source>
</evidence>
<evidence type="ECO:0000312" key="9">
    <source>
        <dbReference type="Proteomes" id="UP000000799"/>
    </source>
</evidence>
<evidence type="ECO:0007744" key="10">
    <source>
        <dbReference type="PDB" id="7KWS"/>
    </source>
</evidence>
<evidence type="ECO:0007829" key="11">
    <source>
        <dbReference type="PDB" id="7KWS"/>
    </source>
</evidence>
<feature type="chain" id="PRO_0000454940" description="UDP-glucose 6-dehydrogenase">
    <location>
        <begin position="1"/>
        <end position="393"/>
    </location>
</feature>
<feature type="active site" description="Nucleophile" evidence="2 7">
    <location>
        <position position="255"/>
    </location>
</feature>
<feature type="binding site" evidence="4 10">
    <location>
        <position position="11"/>
    </location>
    <ligand>
        <name>NAD(+)</name>
        <dbReference type="ChEBI" id="CHEBI:57540"/>
    </ligand>
</feature>
<feature type="binding site" evidence="3 4 10">
    <location>
        <position position="31"/>
    </location>
    <ligand>
        <name>NAD(+)</name>
        <dbReference type="ChEBI" id="CHEBI:57540"/>
    </ligand>
</feature>
<feature type="binding site" evidence="3 4 10">
    <location>
        <position position="36"/>
    </location>
    <ligand>
        <name>NAD(+)</name>
        <dbReference type="ChEBI" id="CHEBI:57540"/>
    </ligand>
</feature>
<feature type="binding site" evidence="3 4 10">
    <location>
        <position position="85"/>
    </location>
    <ligand>
        <name>NAD(+)</name>
        <dbReference type="ChEBI" id="CHEBI:57540"/>
    </ligand>
</feature>
<feature type="binding site" evidence="3 4 10">
    <location>
        <position position="120"/>
    </location>
    <ligand>
        <name>NAD(+)</name>
        <dbReference type="ChEBI" id="CHEBI:57540"/>
    </ligand>
</feature>
<feature type="binding site" evidence="4 10">
    <location>
        <begin position="143"/>
        <end position="147"/>
    </location>
    <ligand>
        <name>substrate</name>
    </ligand>
</feature>
<feature type="binding site" evidence="3 4 10">
    <location>
        <position position="147"/>
    </location>
    <ligand>
        <name>NAD(+)</name>
        <dbReference type="ChEBI" id="CHEBI:57540"/>
    </ligand>
</feature>
<feature type="binding site" evidence="4 10">
    <location>
        <position position="199"/>
    </location>
    <ligand>
        <name>substrate</name>
    </ligand>
</feature>
<feature type="binding site" evidence="4 10">
    <location>
        <position position="203"/>
    </location>
    <ligand>
        <name>substrate</name>
    </ligand>
</feature>
<feature type="binding site" evidence="4 10">
    <location>
        <begin position="244"/>
        <end position="248"/>
    </location>
    <ligand>
        <name>substrate</name>
    </ligand>
</feature>
<feature type="binding site" evidence="4 10">
    <location>
        <position position="252"/>
    </location>
    <ligand>
        <name>substrate</name>
    </ligand>
</feature>
<feature type="binding site" evidence="4 10">
    <location>
        <position position="254"/>
    </location>
    <ligand>
        <name>NAD(+)</name>
        <dbReference type="ChEBI" id="CHEBI:57540"/>
    </ligand>
</feature>
<feature type="binding site" evidence="3 4 10">
    <location>
        <position position="258"/>
    </location>
    <ligand>
        <name>NAD(+)</name>
        <dbReference type="ChEBI" id="CHEBI:57540"/>
    </ligand>
</feature>
<feature type="binding site" evidence="4 10">
    <location>
        <position position="309"/>
    </location>
    <ligand>
        <name>substrate</name>
    </ligand>
</feature>
<feature type="binding site" evidence="3 4 10">
    <location>
        <position position="316"/>
    </location>
    <ligand>
        <name>NAD(+)</name>
        <dbReference type="ChEBI" id="CHEBI:57540"/>
    </ligand>
</feature>
<feature type="strand" evidence="11">
    <location>
        <begin position="2"/>
        <end position="6"/>
    </location>
</feature>
<feature type="helix" evidence="11">
    <location>
        <begin position="10"/>
        <end position="20"/>
    </location>
</feature>
<feature type="strand" evidence="11">
    <location>
        <begin position="25"/>
        <end position="30"/>
    </location>
</feature>
<feature type="helix" evidence="11">
    <location>
        <begin position="34"/>
        <end position="41"/>
    </location>
</feature>
<feature type="helix" evidence="11">
    <location>
        <begin position="50"/>
        <end position="58"/>
    </location>
</feature>
<feature type="strand" evidence="11">
    <location>
        <begin position="64"/>
        <end position="67"/>
    </location>
</feature>
<feature type="helix" evidence="11">
    <location>
        <begin position="69"/>
        <end position="73"/>
    </location>
</feature>
<feature type="strand" evidence="11">
    <location>
        <begin position="77"/>
        <end position="81"/>
    </location>
</feature>
<feature type="strand" evidence="11">
    <location>
        <begin position="86"/>
        <end position="88"/>
    </location>
</feature>
<feature type="turn" evidence="11">
    <location>
        <begin position="89"/>
        <end position="92"/>
    </location>
</feature>
<feature type="strand" evidence="11">
    <location>
        <begin position="93"/>
        <end position="95"/>
    </location>
</feature>
<feature type="helix" evidence="11">
    <location>
        <begin position="97"/>
        <end position="110"/>
    </location>
</feature>
<feature type="strand" evidence="11">
    <location>
        <begin position="113"/>
        <end position="117"/>
    </location>
</feature>
<feature type="helix" evidence="11">
    <location>
        <begin position="125"/>
        <end position="133"/>
    </location>
</feature>
<feature type="strand" evidence="11">
    <location>
        <begin position="138"/>
        <end position="140"/>
    </location>
</feature>
<feature type="helix" evidence="11">
    <location>
        <begin position="150"/>
        <end position="155"/>
    </location>
</feature>
<feature type="strand" evidence="11">
    <location>
        <begin position="160"/>
        <end position="163"/>
    </location>
</feature>
<feature type="helix" evidence="11">
    <location>
        <begin position="167"/>
        <end position="179"/>
    </location>
</feature>
<feature type="strand" evidence="11">
    <location>
        <begin position="187"/>
        <end position="189"/>
    </location>
</feature>
<feature type="helix" evidence="11">
    <location>
        <begin position="192"/>
        <end position="222"/>
    </location>
</feature>
<feature type="helix" evidence="11">
    <location>
        <begin position="227"/>
        <end position="235"/>
    </location>
</feature>
<feature type="turn" evidence="11">
    <location>
        <begin position="238"/>
        <end position="240"/>
    </location>
</feature>
<feature type="strand" evidence="11">
    <location>
        <begin position="242"/>
        <end position="244"/>
    </location>
</feature>
<feature type="helix" evidence="11">
    <location>
        <begin position="255"/>
        <end position="266"/>
    </location>
</feature>
<feature type="helix" evidence="11">
    <location>
        <begin position="274"/>
        <end position="295"/>
    </location>
</feature>
<feature type="strand" evidence="11">
    <location>
        <begin position="299"/>
        <end position="304"/>
    </location>
</feature>
<feature type="strand" evidence="11">
    <location>
        <begin position="306"/>
        <end position="309"/>
    </location>
</feature>
<feature type="helix" evidence="11">
    <location>
        <begin position="319"/>
        <end position="330"/>
    </location>
</feature>
<feature type="strand" evidence="11">
    <location>
        <begin position="334"/>
        <end position="339"/>
    </location>
</feature>
<feature type="strand" evidence="11">
    <location>
        <begin position="345"/>
        <end position="348"/>
    </location>
</feature>
<feature type="strand" evidence="11">
    <location>
        <begin position="351"/>
        <end position="353"/>
    </location>
</feature>
<feature type="helix" evidence="11">
    <location>
        <begin position="357"/>
        <end position="363"/>
    </location>
</feature>
<feature type="strand" evidence="11">
    <location>
        <begin position="365"/>
        <end position="368"/>
    </location>
</feature>
<feature type="helix" evidence="11">
    <location>
        <begin position="374"/>
        <end position="382"/>
    </location>
</feature>
<name>UDG_CAMJE</name>
<dbReference type="EC" id="1.1.1.22" evidence="1 4"/>
<dbReference type="EMBL" id="AL111168">
    <property type="protein sequence ID" value="CAL35550.1"/>
    <property type="molecule type" value="Genomic_DNA"/>
</dbReference>
<dbReference type="PIR" id="A81290">
    <property type="entry name" value="A81290"/>
</dbReference>
<dbReference type="RefSeq" id="WP_002851145.1">
    <property type="nucleotide sequence ID" value="NZ_SZUC01000003.1"/>
</dbReference>
<dbReference type="RefSeq" id="YP_002344824.1">
    <property type="nucleotide sequence ID" value="NC_002163.1"/>
</dbReference>
<dbReference type="PDB" id="7KWS">
    <property type="method" value="X-ray"/>
    <property type="resolution" value="2.09 A"/>
    <property type="chains" value="A/B=1-393"/>
</dbReference>
<dbReference type="PDBsum" id="7KWS"/>
<dbReference type="SMR" id="Q0P8H3"/>
<dbReference type="IntAct" id="Q0P8H3">
    <property type="interactions" value="10"/>
</dbReference>
<dbReference type="STRING" id="192222.Cj1441c"/>
<dbReference type="PaxDb" id="192222-Cj1441c"/>
<dbReference type="EnsemblBacteria" id="CAL35550">
    <property type="protein sequence ID" value="CAL35550"/>
    <property type="gene ID" value="Cj1441c"/>
</dbReference>
<dbReference type="GeneID" id="905730"/>
<dbReference type="KEGG" id="cje:Cj1441c"/>
<dbReference type="PATRIC" id="fig|192222.6.peg.1422"/>
<dbReference type="eggNOG" id="COG1004">
    <property type="taxonomic scope" value="Bacteria"/>
</dbReference>
<dbReference type="HOGENOM" id="CLU_023810_2_0_7"/>
<dbReference type="OrthoDB" id="9803238at2"/>
<dbReference type="BRENDA" id="1.1.1.22">
    <property type="organism ID" value="13746"/>
</dbReference>
<dbReference type="STRENDA-DB" id="QGIDCM">
    <property type="experiment" value="Cj1441"/>
</dbReference>
<dbReference type="UniPathway" id="UPA00038">
    <property type="reaction ID" value="UER00491"/>
</dbReference>
<dbReference type="UniPathway" id="UPA00934"/>
<dbReference type="Proteomes" id="UP000000799">
    <property type="component" value="Chromosome"/>
</dbReference>
<dbReference type="GO" id="GO:0042802">
    <property type="term" value="F:identical protein binding"/>
    <property type="evidence" value="ECO:0000314"/>
    <property type="project" value="UniProtKB"/>
</dbReference>
<dbReference type="GO" id="GO:0051287">
    <property type="term" value="F:NAD binding"/>
    <property type="evidence" value="ECO:0000314"/>
    <property type="project" value="UniProtKB"/>
</dbReference>
<dbReference type="GO" id="GO:0042803">
    <property type="term" value="F:protein homodimerization activity"/>
    <property type="evidence" value="ECO:0000314"/>
    <property type="project" value="UniProtKB"/>
</dbReference>
<dbReference type="GO" id="GO:0003979">
    <property type="term" value="F:UDP-glucose 6-dehydrogenase activity"/>
    <property type="evidence" value="ECO:0000314"/>
    <property type="project" value="UniProtKB"/>
</dbReference>
<dbReference type="GO" id="GO:0045227">
    <property type="term" value="P:capsule polysaccharide biosynthetic process"/>
    <property type="evidence" value="ECO:0000305"/>
    <property type="project" value="UniProtKB"/>
</dbReference>
<dbReference type="GO" id="GO:0006065">
    <property type="term" value="P:UDP-glucuronate biosynthetic process"/>
    <property type="evidence" value="ECO:0000314"/>
    <property type="project" value="UniProtKB"/>
</dbReference>
<dbReference type="Gene3D" id="1.10.1040.10">
    <property type="entry name" value="N-(1-d-carboxylethyl)-l-norvaline Dehydrogenase, domain 2"/>
    <property type="match status" value="1"/>
</dbReference>
<dbReference type="Gene3D" id="3.40.50.720">
    <property type="entry name" value="NAD(P)-binding Rossmann-like Domain"/>
    <property type="match status" value="2"/>
</dbReference>
<dbReference type="InterPro" id="IPR008927">
    <property type="entry name" value="6-PGluconate_DH-like_C_sf"/>
</dbReference>
<dbReference type="InterPro" id="IPR013328">
    <property type="entry name" value="6PGD_dom2"/>
</dbReference>
<dbReference type="InterPro" id="IPR036291">
    <property type="entry name" value="NAD(P)-bd_dom_sf"/>
</dbReference>
<dbReference type="InterPro" id="IPR017476">
    <property type="entry name" value="UDP-Glc/GDP-Man"/>
</dbReference>
<dbReference type="InterPro" id="IPR014027">
    <property type="entry name" value="UDP-Glc/GDP-Man_DH_C"/>
</dbReference>
<dbReference type="InterPro" id="IPR036220">
    <property type="entry name" value="UDP-Glc/GDP-Man_DH_C_sf"/>
</dbReference>
<dbReference type="InterPro" id="IPR014026">
    <property type="entry name" value="UDP-Glc/GDP-Man_DH_dimer"/>
</dbReference>
<dbReference type="InterPro" id="IPR001732">
    <property type="entry name" value="UDP-Glc/GDP-Man_DH_N"/>
</dbReference>
<dbReference type="InterPro" id="IPR028357">
    <property type="entry name" value="UDPglc_DH_bac"/>
</dbReference>
<dbReference type="NCBIfam" id="TIGR03026">
    <property type="entry name" value="NDP-sugDHase"/>
    <property type="match status" value="1"/>
</dbReference>
<dbReference type="PANTHER" id="PTHR43750:SF2">
    <property type="entry name" value="UDP-GLUCOSE 6-DEHYDROGENASE"/>
    <property type="match status" value="1"/>
</dbReference>
<dbReference type="PANTHER" id="PTHR43750">
    <property type="entry name" value="UDP-GLUCOSE 6-DEHYDROGENASE TUAD"/>
    <property type="match status" value="1"/>
</dbReference>
<dbReference type="Pfam" id="PF00984">
    <property type="entry name" value="UDPG_MGDP_dh"/>
    <property type="match status" value="1"/>
</dbReference>
<dbReference type="Pfam" id="PF03720">
    <property type="entry name" value="UDPG_MGDP_dh_C"/>
    <property type="match status" value="1"/>
</dbReference>
<dbReference type="Pfam" id="PF03721">
    <property type="entry name" value="UDPG_MGDP_dh_N"/>
    <property type="match status" value="1"/>
</dbReference>
<dbReference type="PIRSF" id="PIRSF500134">
    <property type="entry name" value="UDPglc_DH_bac"/>
    <property type="match status" value="1"/>
</dbReference>
<dbReference type="PIRSF" id="PIRSF000124">
    <property type="entry name" value="UDPglc_GDPman_dh"/>
    <property type="match status" value="1"/>
</dbReference>
<dbReference type="SMART" id="SM00984">
    <property type="entry name" value="UDPG_MGDP_dh_C"/>
    <property type="match status" value="1"/>
</dbReference>
<dbReference type="SUPFAM" id="SSF48179">
    <property type="entry name" value="6-phosphogluconate dehydrogenase C-terminal domain-like"/>
    <property type="match status" value="1"/>
</dbReference>
<dbReference type="SUPFAM" id="SSF51735">
    <property type="entry name" value="NAD(P)-binding Rossmann-fold domains"/>
    <property type="match status" value="1"/>
</dbReference>
<dbReference type="SUPFAM" id="SSF52413">
    <property type="entry name" value="UDP-glucose/GDP-mannose dehydrogenase C-terminal domain"/>
    <property type="match status" value="1"/>
</dbReference>
<keyword id="KW-0002">3D-structure</keyword>
<keyword id="KW-0972">Capsule biogenesis/degradation</keyword>
<keyword id="KW-0520">NAD</keyword>
<keyword id="KW-0560">Oxidoreductase</keyword>
<keyword id="KW-1185">Reference proteome</keyword>
<protein>
    <recommendedName>
        <fullName evidence="1 5">UDP-glucose 6-dehydrogenase</fullName>
        <shortName evidence="6">UDP-Glc dehydrogenase</shortName>
        <shortName evidence="6">UDP-GlcDH</shortName>
        <shortName evidence="6">UDPGDH</shortName>
        <ecNumber evidence="1 4">1.1.1.22</ecNumber>
    </recommendedName>
</protein>